<protein>
    <recommendedName>
        <fullName>DNA-binding protein HU</fullName>
    </recommendedName>
</protein>
<name>DBH_HAEIN</name>
<evidence type="ECO:0000250" key="1"/>
<evidence type="ECO:0000305" key="2"/>
<feature type="chain" id="PRO_0000104943" description="DNA-binding protein HU">
    <location>
        <begin position="1"/>
        <end position="90"/>
    </location>
</feature>
<organism>
    <name type="scientific">Haemophilus influenzae (strain ATCC 51907 / DSM 11121 / KW20 / Rd)</name>
    <dbReference type="NCBI Taxonomy" id="71421"/>
    <lineage>
        <taxon>Bacteria</taxon>
        <taxon>Pseudomonadati</taxon>
        <taxon>Pseudomonadota</taxon>
        <taxon>Gammaproteobacteria</taxon>
        <taxon>Pasteurellales</taxon>
        <taxon>Pasteurellaceae</taxon>
        <taxon>Haemophilus</taxon>
    </lineage>
</organism>
<proteinExistence type="inferred from homology"/>
<comment type="function">
    <text evidence="1">Histone-like DNA-binding protein which is capable of wrapping DNA to stabilize it, and thus to prevent its denaturation under extreme environmental conditions.</text>
</comment>
<comment type="subunit">
    <text evidence="2">Homodimer.</text>
</comment>
<comment type="similarity">
    <text evidence="2">Belongs to the bacterial histone-like protein family.</text>
</comment>
<comment type="sequence caution" evidence="2">
    <conflict type="erroneous initiation">
        <sequence resource="EMBL-CDS" id="AAC22089"/>
    </conflict>
</comment>
<dbReference type="EMBL" id="L42023">
    <property type="protein sequence ID" value="AAC22089.1"/>
    <property type="status" value="ALT_INIT"/>
    <property type="molecule type" value="Genomic_DNA"/>
</dbReference>
<dbReference type="PIR" id="E64067">
    <property type="entry name" value="E64067"/>
</dbReference>
<dbReference type="RefSeq" id="NP_438591.2">
    <property type="nucleotide sequence ID" value="NC_000907.1"/>
</dbReference>
<dbReference type="SMR" id="P43722"/>
<dbReference type="STRING" id="71421.HI_0430"/>
<dbReference type="EnsemblBacteria" id="AAC22089">
    <property type="protein sequence ID" value="AAC22089"/>
    <property type="gene ID" value="HI_0430"/>
</dbReference>
<dbReference type="KEGG" id="hin:HI_0430"/>
<dbReference type="PATRIC" id="fig|71421.8.peg.450"/>
<dbReference type="eggNOG" id="COG0776">
    <property type="taxonomic scope" value="Bacteria"/>
</dbReference>
<dbReference type="HOGENOM" id="CLU_105066_3_2_6"/>
<dbReference type="OrthoDB" id="9799835at2"/>
<dbReference type="PhylomeDB" id="P43722"/>
<dbReference type="BioCyc" id="HINF71421:G1GJ1-445-MONOMER"/>
<dbReference type="Proteomes" id="UP000000579">
    <property type="component" value="Chromosome"/>
</dbReference>
<dbReference type="GO" id="GO:0005829">
    <property type="term" value="C:cytosol"/>
    <property type="evidence" value="ECO:0000318"/>
    <property type="project" value="GO_Central"/>
</dbReference>
<dbReference type="GO" id="GO:0003677">
    <property type="term" value="F:DNA binding"/>
    <property type="evidence" value="ECO:0000318"/>
    <property type="project" value="GO_Central"/>
</dbReference>
<dbReference type="GO" id="GO:0030527">
    <property type="term" value="F:structural constituent of chromatin"/>
    <property type="evidence" value="ECO:0007669"/>
    <property type="project" value="InterPro"/>
</dbReference>
<dbReference type="GO" id="GO:0030261">
    <property type="term" value="P:chromosome condensation"/>
    <property type="evidence" value="ECO:0007669"/>
    <property type="project" value="UniProtKB-KW"/>
</dbReference>
<dbReference type="CDD" id="cd13831">
    <property type="entry name" value="HU"/>
    <property type="match status" value="1"/>
</dbReference>
<dbReference type="FunFam" id="4.10.520.10:FF:000001">
    <property type="entry name" value="DNA-binding protein HU"/>
    <property type="match status" value="1"/>
</dbReference>
<dbReference type="Gene3D" id="4.10.520.10">
    <property type="entry name" value="IHF-like DNA-binding proteins"/>
    <property type="match status" value="1"/>
</dbReference>
<dbReference type="InterPro" id="IPR000119">
    <property type="entry name" value="Hist_DNA-bd"/>
</dbReference>
<dbReference type="InterPro" id="IPR020816">
    <property type="entry name" value="Histone-like_DNA-bd_CS"/>
</dbReference>
<dbReference type="InterPro" id="IPR010992">
    <property type="entry name" value="IHF-like_DNA-bd_dom_sf"/>
</dbReference>
<dbReference type="PANTHER" id="PTHR33175">
    <property type="entry name" value="DNA-BINDING PROTEIN HU"/>
    <property type="match status" value="1"/>
</dbReference>
<dbReference type="PANTHER" id="PTHR33175:SF12">
    <property type="entry name" value="DNA-BINDING PROTEIN HU-ALPHA"/>
    <property type="match status" value="1"/>
</dbReference>
<dbReference type="Pfam" id="PF00216">
    <property type="entry name" value="Bac_DNA_binding"/>
    <property type="match status" value="1"/>
</dbReference>
<dbReference type="PRINTS" id="PR01727">
    <property type="entry name" value="DNABINDINGHU"/>
</dbReference>
<dbReference type="SMART" id="SM00411">
    <property type="entry name" value="BHL"/>
    <property type="match status" value="1"/>
</dbReference>
<dbReference type="SUPFAM" id="SSF47729">
    <property type="entry name" value="IHF-like DNA-binding proteins"/>
    <property type="match status" value="1"/>
</dbReference>
<dbReference type="PROSITE" id="PS00045">
    <property type="entry name" value="HISTONE_LIKE"/>
    <property type="match status" value="1"/>
</dbReference>
<accession>P43722</accession>
<sequence length="90" mass="9421">MNKTDLIDAIANAAELNKKQAKAALEATLDAITASLKEGEPVQLIGFGTFKVNERAARTGRNPQTGAEIQIAASKVPAFVSGKALKDAIK</sequence>
<reference key="1">
    <citation type="journal article" date="1995" name="Science">
        <title>Whole-genome random sequencing and assembly of Haemophilus influenzae Rd.</title>
        <authorList>
            <person name="Fleischmann R.D."/>
            <person name="Adams M.D."/>
            <person name="White O."/>
            <person name="Clayton R.A."/>
            <person name="Kirkness E.F."/>
            <person name="Kerlavage A.R."/>
            <person name="Bult C.J."/>
            <person name="Tomb J.-F."/>
            <person name="Dougherty B.A."/>
            <person name="Merrick J.M."/>
            <person name="McKenney K."/>
            <person name="Sutton G.G."/>
            <person name="FitzHugh W."/>
            <person name="Fields C.A."/>
            <person name="Gocayne J.D."/>
            <person name="Scott J.D."/>
            <person name="Shirley R."/>
            <person name="Liu L.-I."/>
            <person name="Glodek A."/>
            <person name="Kelley J.M."/>
            <person name="Weidman J.F."/>
            <person name="Phillips C.A."/>
            <person name="Spriggs T."/>
            <person name="Hedblom E."/>
            <person name="Cotton M.D."/>
            <person name="Utterback T.R."/>
            <person name="Hanna M.C."/>
            <person name="Nguyen D.T."/>
            <person name="Saudek D.M."/>
            <person name="Brandon R.C."/>
            <person name="Fine L.D."/>
            <person name="Fritchman J.L."/>
            <person name="Fuhrmann J.L."/>
            <person name="Geoghagen N.S.M."/>
            <person name="Gnehm C.L."/>
            <person name="McDonald L.A."/>
            <person name="Small K.V."/>
            <person name="Fraser C.M."/>
            <person name="Smith H.O."/>
            <person name="Venter J.C."/>
        </authorList>
    </citation>
    <scope>NUCLEOTIDE SEQUENCE [LARGE SCALE GENOMIC DNA]</scope>
    <source>
        <strain>ATCC 51907 / DSM 11121 / KW20 / Rd</strain>
    </source>
</reference>
<keyword id="KW-0226">DNA condensation</keyword>
<keyword id="KW-0238">DNA-binding</keyword>
<keyword id="KW-1185">Reference proteome</keyword>
<gene>
    <name type="primary">hup</name>
    <name type="synonym">hupA</name>
    <name type="ordered locus">HI_0430</name>
</gene>